<sequence>MTTKKLYFLSISIIILVAISIAIYITLNSNTKTRLTNDSQQQIDTIIEHDLQKGHIPGASILIVKNGKVFLNKGYGYQDVDKKVKASPTTKYEIASNTKAFTGLAILKLAQEGRLNLNDAVSKHVPHFKMNYNGQNETITIKQLLAQTSGIPSDITSEDSVTSKNNRLNDVTHAIMGDELHHKPGEEFEYSNMNYDLLGLIIQNVTKQSYTKYITNSWLKPLHMTHTSFKQTNYKSKHDAIGYELQGSTPVVSKPEFNLWDTPSAYMMTSTEDLEHWIKFQLNPPDKYKSLVQQSHKNLSSTIGEPNANAYASGWFTNNDEHLVFHSGTLDNFSSFILLNPKQNYGIVVLANLNSEYVPKLVEHLNTQIVNHKRYSTVASMLNQYKDQFNIVTVLMTTLILLAFIFSAYRAWQMRHGQILLRRSKRIAVLSWLSLCICIALALILYALPYLILGSNNWSFVLTWLPIEIKLALITTLIALFSTLIVILLFLHTKITKT</sequence>
<name>FLP_STAAU</name>
<dbReference type="EMBL" id="AF210139">
    <property type="protein sequence ID" value="AAF86053.1"/>
    <property type="molecule type" value="Genomic_DNA"/>
</dbReference>
<dbReference type="RefSeq" id="WP_000208575.1">
    <property type="nucleotide sequence ID" value="NZ_WWFR01000003.1"/>
</dbReference>
<dbReference type="SMR" id="Q9KJ74"/>
<dbReference type="MEROPS" id="S12.011"/>
<dbReference type="PATRIC" id="fig|1280.3517.peg.496"/>
<dbReference type="BRENDA" id="3.1.1.103">
    <property type="organism ID" value="3352"/>
</dbReference>
<dbReference type="GO" id="GO:0005886">
    <property type="term" value="C:plasma membrane"/>
    <property type="evidence" value="ECO:0007669"/>
    <property type="project" value="UniProtKB-SubCell"/>
</dbReference>
<dbReference type="Gene3D" id="3.40.710.10">
    <property type="entry name" value="DD-peptidase/beta-lactamase superfamily"/>
    <property type="match status" value="1"/>
</dbReference>
<dbReference type="InterPro" id="IPR050491">
    <property type="entry name" value="Bact_CellWall_Synth/Modif"/>
</dbReference>
<dbReference type="InterPro" id="IPR001466">
    <property type="entry name" value="Beta-lactam-related"/>
</dbReference>
<dbReference type="InterPro" id="IPR012338">
    <property type="entry name" value="Beta-lactam/transpept-like"/>
</dbReference>
<dbReference type="PANTHER" id="PTHR46825">
    <property type="entry name" value="D-ALANYL-D-ALANINE-CARBOXYPEPTIDASE/ENDOPEPTIDASE AMPH"/>
    <property type="match status" value="1"/>
</dbReference>
<dbReference type="PANTHER" id="PTHR46825:SF11">
    <property type="entry name" value="PENICILLIN-BINDING PROTEIN 4"/>
    <property type="match status" value="1"/>
</dbReference>
<dbReference type="Pfam" id="PF00144">
    <property type="entry name" value="Beta-lactamase"/>
    <property type="match status" value="1"/>
</dbReference>
<dbReference type="SUPFAM" id="SSF56601">
    <property type="entry name" value="beta-lactamase/transpeptidase-like"/>
    <property type="match status" value="1"/>
</dbReference>
<gene>
    <name type="primary">flp</name>
</gene>
<organism>
    <name type="scientific">Staphylococcus aureus</name>
    <dbReference type="NCBI Taxonomy" id="1280"/>
    <lineage>
        <taxon>Bacteria</taxon>
        <taxon>Bacillati</taxon>
        <taxon>Bacillota</taxon>
        <taxon>Bacilli</taxon>
        <taxon>Bacillales</taxon>
        <taxon>Staphylococcaceae</taxon>
        <taxon>Staphylococcus</taxon>
    </lineage>
</organism>
<keyword id="KW-1003">Cell membrane</keyword>
<keyword id="KW-0472">Membrane</keyword>
<keyword id="KW-0812">Transmembrane</keyword>
<keyword id="KW-1133">Transmembrane helix</keyword>
<feature type="chain" id="PRO_0000087309" description="Protein flp">
    <location>
        <begin position="1"/>
        <end position="498"/>
    </location>
</feature>
<feature type="transmembrane region" description="Helical" evidence="1">
    <location>
        <begin position="6"/>
        <end position="26"/>
    </location>
</feature>
<feature type="transmembrane region" description="Helical" evidence="1">
    <location>
        <begin position="389"/>
        <end position="409"/>
    </location>
</feature>
<feature type="transmembrane region" description="Helical" evidence="1">
    <location>
        <begin position="433"/>
        <end position="453"/>
    </location>
</feature>
<feature type="transmembrane region" description="Helical" evidence="1">
    <location>
        <begin position="471"/>
        <end position="491"/>
    </location>
</feature>
<comment type="function">
    <text evidence="2">Its precise function is unknown. Has no penicillin-binding activity and is not involved in methicillin resistance.</text>
</comment>
<comment type="subcellular location">
    <subcellularLocation>
        <location evidence="3">Cell membrane</location>
        <topology evidence="3">Multi-pass membrane protein</topology>
    </subcellularLocation>
</comment>
<comment type="miscellaneous">
    <text>Has two of three conserved motifs typically found in penicillin-binding proteins (PBPs) and beta-lactamases, but no penicillin-binding activity has been detected.</text>
</comment>
<reference key="1">
    <citation type="journal article" date="2000" name="FEMS Microbiol. Lett.">
        <title>Identification of a fmtA-like gene that has similarity to other PBPs and beta-lactamases in Staphylococcus aureus.</title>
        <authorList>
            <person name="Komatsuzawa H."/>
            <person name="Choi G.H."/>
            <person name="Fujiwara T."/>
            <person name="Huang Y."/>
            <person name="Ohta K."/>
            <person name="Sugai M."/>
            <person name="Suginaka H."/>
        </authorList>
    </citation>
    <scope>NUCLEOTIDE SEQUENCE [GENOMIC DNA]</scope>
    <scope>FUNCTION</scope>
    <source>
        <strain>ISP3</strain>
    </source>
</reference>
<evidence type="ECO:0000255" key="1"/>
<evidence type="ECO:0000269" key="2">
    <source>
    </source>
</evidence>
<evidence type="ECO:0000305" key="3"/>
<proteinExistence type="predicted"/>
<protein>
    <recommendedName>
        <fullName>Protein flp</fullName>
    </recommendedName>
    <alternativeName>
        <fullName>FmtA-like protein</fullName>
    </alternativeName>
</protein>
<accession>Q9KJ74</accession>